<comment type="function">
    <text evidence="1">FMRFamides and FMRFamide-like peptides are neuropeptides.</text>
</comment>
<comment type="subcellular location">
    <subcellularLocation>
        <location evidence="6">Secreted</location>
    </subcellularLocation>
</comment>
<comment type="similarity">
    <text evidence="2">Belongs to the FARP (FMRF amide related peptide) family.</text>
</comment>
<feature type="peptide" id="PRO_0000420748" description="Extended FMRFamide-12" evidence="3">
    <location>
        <begin position="1"/>
        <end position="15"/>
    </location>
</feature>
<feature type="modified residue" description="Leucine amide" evidence="3">
    <location>
        <position position="15"/>
    </location>
</feature>
<feature type="unsure residue" description="L or I" evidence="3">
    <location>
        <position position="4"/>
    </location>
</feature>
<feature type="unsure residue" description="L or I" evidence="3">
    <location>
        <position position="13"/>
    </location>
</feature>
<feature type="unsure residue" description="L or I" evidence="3">
    <location>
        <position position="15"/>
    </location>
</feature>
<reference evidence="5" key="1">
    <citation type="journal article" date="2012" name="Syst. Biol.">
        <title>Peptidomics-based phylogeny and biogeography of Mantophasmatodea (Hexapoda).</title>
        <authorList>
            <person name="Predel R."/>
            <person name="Neupert S."/>
            <person name="Huetteroth W."/>
            <person name="Kahnt J."/>
            <person name="Waidelich D."/>
            <person name="Roth S."/>
        </authorList>
    </citation>
    <scope>PROTEIN SEQUENCE</scope>
    <scope>AMIDATION AT LEU-15</scope>
    <source>
        <tissue evidence="3">Thoracic perisympathetic organs</tissue>
    </source>
</reference>
<proteinExistence type="evidence at protein level"/>
<name>FAR12_STRNA</name>
<protein>
    <recommendedName>
        <fullName evidence="4">Extended FMRFamide-12</fullName>
        <shortName evidence="4">FMRFa-12</shortName>
    </recommendedName>
</protein>
<accession>B0M3B5</accession>
<dbReference type="GO" id="GO:0005576">
    <property type="term" value="C:extracellular region"/>
    <property type="evidence" value="ECO:0007669"/>
    <property type="project" value="UniProtKB-SubCell"/>
</dbReference>
<dbReference type="GO" id="GO:0007218">
    <property type="term" value="P:neuropeptide signaling pathway"/>
    <property type="evidence" value="ECO:0007669"/>
    <property type="project" value="UniProtKB-KW"/>
</dbReference>
<keyword id="KW-0027">Amidation</keyword>
<keyword id="KW-0903">Direct protein sequencing</keyword>
<keyword id="KW-0527">Neuropeptide</keyword>
<keyword id="KW-0964">Secreted</keyword>
<sequence>SPALDDEHNDNFLRL</sequence>
<organism>
    <name type="scientific">Striatophasma naukluftense</name>
    <name type="common">Gladiator</name>
    <name type="synonym">Heel-walker</name>
    <dbReference type="NCBI Taxonomy" id="1041429"/>
    <lineage>
        <taxon>Eukaryota</taxon>
        <taxon>Metazoa</taxon>
        <taxon>Ecdysozoa</taxon>
        <taxon>Arthropoda</taxon>
        <taxon>Hexapoda</taxon>
        <taxon>Insecta</taxon>
        <taxon>Pterygota</taxon>
        <taxon>Neoptera</taxon>
        <taxon>Polyneoptera</taxon>
        <taxon>Mantophasmatodea</taxon>
        <taxon>Austrophasmatidae</taxon>
        <taxon>Striatophasma</taxon>
    </lineage>
</organism>
<evidence type="ECO:0000250" key="1">
    <source>
        <dbReference type="UniProtKB" id="P34405"/>
    </source>
</evidence>
<evidence type="ECO:0000255" key="2"/>
<evidence type="ECO:0000269" key="3">
    <source>
    </source>
</evidence>
<evidence type="ECO:0000303" key="4">
    <source>
    </source>
</evidence>
<evidence type="ECO:0000305" key="5"/>
<evidence type="ECO:0000305" key="6">
    <source>
    </source>
</evidence>